<accession>P45240</accession>
<gene>
    <name evidence="1" type="primary">gltS</name>
    <name type="ordered locus">HI_1530</name>
</gene>
<dbReference type="EMBL" id="L42023">
    <property type="protein sequence ID" value="AAC23176.1"/>
    <property type="molecule type" value="Genomic_DNA"/>
</dbReference>
<dbReference type="PIR" id="G64127">
    <property type="entry name" value="G64127"/>
</dbReference>
<dbReference type="RefSeq" id="NP_439679.1">
    <property type="nucleotide sequence ID" value="NC_000907.1"/>
</dbReference>
<dbReference type="SMR" id="P45240"/>
<dbReference type="STRING" id="71421.HI_1530"/>
<dbReference type="EnsemblBacteria" id="AAC23176">
    <property type="protein sequence ID" value="AAC23176"/>
    <property type="gene ID" value="HI_1530"/>
</dbReference>
<dbReference type="KEGG" id="hin:HI_1530"/>
<dbReference type="PATRIC" id="fig|71421.8.peg.1601"/>
<dbReference type="eggNOG" id="COG0786">
    <property type="taxonomic scope" value="Bacteria"/>
</dbReference>
<dbReference type="HOGENOM" id="CLU_040907_0_0_6"/>
<dbReference type="OrthoDB" id="4921038at2"/>
<dbReference type="PhylomeDB" id="P45240"/>
<dbReference type="BioCyc" id="HINF71421:G1GJ1-1552-MONOMER"/>
<dbReference type="Proteomes" id="UP000000579">
    <property type="component" value="Chromosome"/>
</dbReference>
<dbReference type="GO" id="GO:0005886">
    <property type="term" value="C:plasma membrane"/>
    <property type="evidence" value="ECO:0000318"/>
    <property type="project" value="GO_Central"/>
</dbReference>
<dbReference type="GO" id="GO:0015501">
    <property type="term" value="F:glutamate:sodium symporter activity"/>
    <property type="evidence" value="ECO:0000318"/>
    <property type="project" value="GO_Central"/>
</dbReference>
<dbReference type="GO" id="GO:0015813">
    <property type="term" value="P:L-glutamate transmembrane transport"/>
    <property type="evidence" value="ECO:0000318"/>
    <property type="project" value="GO_Central"/>
</dbReference>
<dbReference type="HAMAP" id="MF_02062">
    <property type="entry name" value="GltS"/>
    <property type="match status" value="1"/>
</dbReference>
<dbReference type="InterPro" id="IPR004445">
    <property type="entry name" value="GltS"/>
</dbReference>
<dbReference type="NCBIfam" id="TIGR00210">
    <property type="entry name" value="gltS"/>
    <property type="match status" value="1"/>
</dbReference>
<dbReference type="PANTHER" id="PTHR36178">
    <property type="entry name" value="SLR0625 PROTEIN"/>
    <property type="match status" value="1"/>
</dbReference>
<dbReference type="PANTHER" id="PTHR36178:SF1">
    <property type="entry name" value="SODIUM_GLUTAMATE SYMPORTER"/>
    <property type="match status" value="1"/>
</dbReference>
<dbReference type="Pfam" id="PF03616">
    <property type="entry name" value="Glt_symporter"/>
    <property type="match status" value="1"/>
</dbReference>
<proteinExistence type="inferred from homology"/>
<feature type="chain" id="PRO_0000052334" description="Sodium/glutamate symporter">
    <location>
        <begin position="1"/>
        <end position="404"/>
    </location>
</feature>
<feature type="transmembrane region" description="Helical" evidence="1">
    <location>
        <begin position="5"/>
        <end position="25"/>
    </location>
</feature>
<feature type="transmembrane region" description="Helical" evidence="1">
    <location>
        <begin position="33"/>
        <end position="53"/>
    </location>
</feature>
<feature type="transmembrane region" description="Helical" evidence="1">
    <location>
        <begin position="69"/>
        <end position="89"/>
    </location>
</feature>
<feature type="transmembrane region" description="Helical" evidence="1">
    <location>
        <begin position="95"/>
        <end position="115"/>
    </location>
</feature>
<feature type="transmembrane region" description="Helical" evidence="1">
    <location>
        <begin position="161"/>
        <end position="181"/>
    </location>
</feature>
<feature type="transmembrane region" description="Helical" evidence="1">
    <location>
        <begin position="219"/>
        <end position="239"/>
    </location>
</feature>
<feature type="transmembrane region" description="Helical" evidence="1">
    <location>
        <begin position="245"/>
        <end position="265"/>
    </location>
</feature>
<feature type="transmembrane region" description="Helical" evidence="1">
    <location>
        <begin position="277"/>
        <end position="297"/>
    </location>
</feature>
<feature type="transmembrane region" description="Helical" evidence="1">
    <location>
        <begin position="307"/>
        <end position="327"/>
    </location>
</feature>
<feature type="transmembrane region" description="Helical" evidence="1">
    <location>
        <begin position="338"/>
        <end position="358"/>
    </location>
</feature>
<feature type="transmembrane region" description="Helical" evidence="1">
    <location>
        <begin position="373"/>
        <end position="393"/>
    </location>
</feature>
<keyword id="KW-0029">Amino-acid transport</keyword>
<keyword id="KW-0997">Cell inner membrane</keyword>
<keyword id="KW-1003">Cell membrane</keyword>
<keyword id="KW-0406">Ion transport</keyword>
<keyword id="KW-0472">Membrane</keyword>
<keyword id="KW-1185">Reference proteome</keyword>
<keyword id="KW-0915">Sodium</keyword>
<keyword id="KW-0739">Sodium transport</keyword>
<keyword id="KW-0769">Symport</keyword>
<keyword id="KW-0812">Transmembrane</keyword>
<keyword id="KW-1133">Transmembrane helix</keyword>
<keyword id="KW-0813">Transport</keyword>
<evidence type="ECO:0000255" key="1">
    <source>
        <dbReference type="HAMAP-Rule" id="MF_02062"/>
    </source>
</evidence>
<protein>
    <recommendedName>
        <fullName evidence="1">Sodium/glutamate symporter</fullName>
    </recommendedName>
</protein>
<organism>
    <name type="scientific">Haemophilus influenzae (strain ATCC 51907 / DSM 11121 / KW20 / Rd)</name>
    <dbReference type="NCBI Taxonomy" id="71421"/>
    <lineage>
        <taxon>Bacteria</taxon>
        <taxon>Pseudomonadati</taxon>
        <taxon>Pseudomonadota</taxon>
        <taxon>Gammaproteobacteria</taxon>
        <taxon>Pasteurellales</taxon>
        <taxon>Pasteurellaceae</taxon>
        <taxon>Haemophilus</taxon>
    </lineage>
</organism>
<sequence length="404" mass="43371">MSYTFSTYETLALASLVLLLGYFLVKRINVLKTFNIPEPVVGGFIVAIGLLIWHKIDGTSFNFDKNLQTTMMLVFFTSIGLSANFSRLIKGGKPLVVFLFIAALLIFGQNVIGIASSMALGIHPAYGLLAGSVTLTGGHGTGAAWADTFAHQFNLQGATEIAIACATFGLVFGGIIGGPVARFLLNRQKQGENPENDEVDDIQEAFEHPTYKRKITARSLIETIAMISVCLLIGQYLDVQTKGTALQLPTFVWCLFTGVIVRNILTNIFRFQVAESAIDVLGSVGLSIFLAIALMSLRLWELAGLAIDVLIVLAIQVAFMAAFAIFITYRAMGKDYDAVVLSAGHCGFGLGATPTAIANMQAVTSRFGPSHKAFLIVPMVGAFFIDLINAALLKVSFAVVNILA</sequence>
<comment type="function">
    <text evidence="1">Catalyzes the sodium-dependent transport of glutamate.</text>
</comment>
<comment type="subcellular location">
    <subcellularLocation>
        <location evidence="1">Cell inner membrane</location>
        <topology evidence="1">Multi-pass membrane protein</topology>
    </subcellularLocation>
</comment>
<comment type="similarity">
    <text evidence="1">Belongs to the glutamate:Na(+) symporter (ESS) (TC 2.A.27) family.</text>
</comment>
<reference key="1">
    <citation type="journal article" date="1995" name="Science">
        <title>Whole-genome random sequencing and assembly of Haemophilus influenzae Rd.</title>
        <authorList>
            <person name="Fleischmann R.D."/>
            <person name="Adams M.D."/>
            <person name="White O."/>
            <person name="Clayton R.A."/>
            <person name="Kirkness E.F."/>
            <person name="Kerlavage A.R."/>
            <person name="Bult C.J."/>
            <person name="Tomb J.-F."/>
            <person name="Dougherty B.A."/>
            <person name="Merrick J.M."/>
            <person name="McKenney K."/>
            <person name="Sutton G.G."/>
            <person name="FitzHugh W."/>
            <person name="Fields C.A."/>
            <person name="Gocayne J.D."/>
            <person name="Scott J.D."/>
            <person name="Shirley R."/>
            <person name="Liu L.-I."/>
            <person name="Glodek A."/>
            <person name="Kelley J.M."/>
            <person name="Weidman J.F."/>
            <person name="Phillips C.A."/>
            <person name="Spriggs T."/>
            <person name="Hedblom E."/>
            <person name="Cotton M.D."/>
            <person name="Utterback T.R."/>
            <person name="Hanna M.C."/>
            <person name="Nguyen D.T."/>
            <person name="Saudek D.M."/>
            <person name="Brandon R.C."/>
            <person name="Fine L.D."/>
            <person name="Fritchman J.L."/>
            <person name="Fuhrmann J.L."/>
            <person name="Geoghagen N.S.M."/>
            <person name="Gnehm C.L."/>
            <person name="McDonald L.A."/>
            <person name="Small K.V."/>
            <person name="Fraser C.M."/>
            <person name="Smith H.O."/>
            <person name="Venter J.C."/>
        </authorList>
    </citation>
    <scope>NUCLEOTIDE SEQUENCE [LARGE SCALE GENOMIC DNA]</scope>
    <source>
        <strain>ATCC 51907 / DSM 11121 / KW20 / Rd</strain>
    </source>
</reference>
<name>GLTS_HAEIN</name>